<reference key="1">
    <citation type="journal article" date="1987" name="Mol. Gen. Genet.">
        <title>Genetic analysis of the parB+ locus of plasmid R1.</title>
        <authorList>
            <person name="Rasmussen P.B."/>
            <person name="Gerdes K."/>
            <person name="Molin S."/>
        </authorList>
    </citation>
    <scope>NUCLEOTIDE SEQUENCE [GENOMIC DNA]</scope>
    <source>
        <strain>CSH50</strain>
        <plasmid>IncFII R1</plasmid>
    </source>
</reference>
<reference key="2">
    <citation type="journal article" date="1990" name="Mol. Microbiol.">
        <title>Mechanism of post-segregational killing by the hok/sok system of plasmid R1: sok antisense RNA regulates formation of a hok mRNA species correlated with killing of plasmid-free cells.</title>
        <authorList>
            <person name="Gerdes K."/>
            <person name="Thisted T."/>
            <person name="Martinussen J."/>
        </authorList>
    </citation>
    <scope>NUCLEOTIDE SEQUENCE [GENOMIC DNA]</scope>
    <source>
        <strain>CSH50</strain>
        <plasmid>IncFII R1</plasmid>
    </source>
</reference>
<reference key="3">
    <citation type="journal article" date="1986" name="EMBO J.">
        <title>Mechanism of postsegregational killing by the hok gene product of the parB system of plasmid R1 and its homology with the relF gene product of the E. coli relB operon.</title>
        <authorList>
            <person name="Gerdes K."/>
            <person name="Bech F.W."/>
            <person name="Joergensen S.T."/>
            <person name="Loebner-Olesen A."/>
            <person name="Rasmussen P.B."/>
            <person name="Atlung T."/>
            <person name="Boe L."/>
            <person name="Karlstrom O."/>
            <person name="Molin S."/>
            <person name="von Meyenburg K."/>
        </authorList>
    </citation>
    <scope>FUNCTION</scope>
    <scope>SUBCELLULAR LOCATION</scope>
    <source>
        <strain>CSH50</strain>
        <plasmid>IncFII R1</plasmid>
    </source>
</reference>
<accession>P11895</accession>
<keyword id="KW-0997">Cell inner membrane</keyword>
<keyword id="KW-1003">Cell membrane</keyword>
<keyword id="KW-0472">Membrane</keyword>
<keyword id="KW-0614">Plasmid</keyword>
<keyword id="KW-1277">Toxin-antitoxin system</keyword>
<keyword id="KW-0812">Transmembrane</keyword>
<keyword id="KW-1133">Transmembrane helix</keyword>
<name>HOK_ECOLX</name>
<protein>
    <recommendedName>
        <fullName>Protein Hok</fullName>
    </recommendedName>
</protein>
<sequence>MKLPRSSLVWCVLIVCLTLLIFTYLTRKSLCEIRYRDGHREVAAFMAYESGK</sequence>
<evidence type="ECO:0000255" key="1"/>
<evidence type="ECO:0000269" key="2">
    <source>
    </source>
</evidence>
<evidence type="ECO:0000305" key="3"/>
<evidence type="ECO:0000305" key="4">
    <source>
    </source>
</evidence>
<geneLocation type="plasmid">
    <name>IncFII R1</name>
</geneLocation>
<proteinExistence type="inferred from homology"/>
<dbReference type="EMBL" id="X05813">
    <property type="protein sequence ID" value="CAA29259.1"/>
    <property type="molecule type" value="Genomic_DNA"/>
</dbReference>
<dbReference type="EMBL" id="A00659">
    <property type="protein sequence ID" value="CAA00075.1"/>
    <property type="molecule type" value="Unassigned_DNA"/>
</dbReference>
<dbReference type="PIR" id="S00301">
    <property type="entry name" value="S00301"/>
</dbReference>
<dbReference type="RefSeq" id="NP_863052.1">
    <property type="nucleotide sequence ID" value="NC_004998.1"/>
</dbReference>
<dbReference type="RefSeq" id="NP_957589.1">
    <property type="nucleotide sequence ID" value="NC_005327.1"/>
</dbReference>
<dbReference type="RefSeq" id="WP_001312861.1">
    <property type="nucleotide sequence ID" value="NZ_VHJJ01000261.1"/>
</dbReference>
<dbReference type="RefSeq" id="YP_001096459.1">
    <property type="nucleotide sequence ID" value="NC_009133.1"/>
</dbReference>
<dbReference type="RefSeq" id="YP_003108239.1">
    <property type="nucleotide sequence ID" value="NC_013121.1"/>
</dbReference>
<dbReference type="RefSeq" id="YP_003108294.1">
    <property type="nucleotide sequence ID" value="NC_013122.1"/>
</dbReference>
<dbReference type="RefSeq" id="YP_006954261.1">
    <property type="nucleotide sequence ID" value="NC_019095.1"/>
</dbReference>
<dbReference type="RefSeq" id="YP_006990749.1">
    <property type="nucleotide sequence ID" value="NC_019424.1"/>
</dbReference>
<dbReference type="RefSeq" id="YP_008997969.1">
    <property type="nucleotide sequence ID" value="NC_023315.1"/>
</dbReference>
<dbReference type="RefSeq" id="YP_009066471.1">
    <property type="nucleotide sequence ID" value="NC_025106.1"/>
</dbReference>
<dbReference type="RefSeq" id="YP_009068364.1">
    <property type="nucleotide sequence ID" value="NC_025139.1"/>
</dbReference>
<dbReference type="RefSeq" id="YP_009071075.1">
    <property type="nucleotide sequence ID" value="NC_025177.1"/>
</dbReference>
<dbReference type="RefSeq" id="YP_190154.1">
    <property type="nucleotide sequence ID" value="NC_006671.1"/>
</dbReference>
<dbReference type="SMR" id="P11895"/>
<dbReference type="OMA" id="NIRIASY"/>
<dbReference type="GO" id="GO:0005886">
    <property type="term" value="C:plasma membrane"/>
    <property type="evidence" value="ECO:0007669"/>
    <property type="project" value="UniProtKB-SubCell"/>
</dbReference>
<dbReference type="InterPro" id="IPR000021">
    <property type="entry name" value="Hok/gef_toxin"/>
</dbReference>
<dbReference type="InterPro" id="IPR018084">
    <property type="entry name" value="Hok/gef_toxin_CS"/>
</dbReference>
<dbReference type="NCBIfam" id="NF007279">
    <property type="entry name" value="PRK09738.1"/>
    <property type="match status" value="1"/>
</dbReference>
<dbReference type="Pfam" id="PF01848">
    <property type="entry name" value="HOK_GEF"/>
    <property type="match status" value="1"/>
</dbReference>
<dbReference type="PRINTS" id="PR00281">
    <property type="entry name" value="HOKGEFTOXIC"/>
</dbReference>
<dbReference type="PROSITE" id="PS00556">
    <property type="entry name" value="HOK_GEF"/>
    <property type="match status" value="1"/>
</dbReference>
<gene>
    <name type="primary">hok</name>
</gene>
<feature type="chain" id="PRO_0000199042" description="Protein Hok">
    <location>
        <begin position="1"/>
        <end position="52"/>
    </location>
</feature>
<feature type="transmembrane region" description="Helical" evidence="1">
    <location>
        <begin position="6"/>
        <end position="26"/>
    </location>
</feature>
<comment type="function">
    <text evidence="2 3">Toxic component of a type I toxin-antitoxin (TA) system. Part of the plasmid-stabilizing activity of plasmid R1; when R1 is lost cells die rapidly. When overexpressed kills cells within 5 minutes; causes collapse of the transmembrane potential and arrest of respiration (PubMed:3019679). Its toxic effect is partially neutralized by antisense RNA Sok.</text>
</comment>
<comment type="subcellular location">
    <subcellularLocation>
        <location evidence="4">Cell inner membrane</location>
        <topology evidence="3">Single-pass membrane protein</topology>
    </subcellularLocation>
</comment>
<comment type="similarity">
    <text evidence="3">Belongs to the Hok/Gef family.</text>
</comment>
<organism>
    <name type="scientific">Escherichia coli</name>
    <dbReference type="NCBI Taxonomy" id="562"/>
    <lineage>
        <taxon>Bacteria</taxon>
        <taxon>Pseudomonadati</taxon>
        <taxon>Pseudomonadota</taxon>
        <taxon>Gammaproteobacteria</taxon>
        <taxon>Enterobacterales</taxon>
        <taxon>Enterobacteriaceae</taxon>
        <taxon>Escherichia</taxon>
    </lineage>
</organism>